<comment type="function">
    <text evidence="1">This protein binds to the 23S rRNA, and is important in its secondary structure. It is located near the subunit interface in the base of the L7/L12 stalk, and near the tRNA binding site of the peptidyltransferase center.</text>
</comment>
<comment type="subunit">
    <text evidence="1">Part of the 50S ribosomal subunit.</text>
</comment>
<comment type="similarity">
    <text evidence="1">Belongs to the universal ribosomal protein uL6 family.</text>
</comment>
<reference key="1">
    <citation type="submission" date="2006-09" db="EMBL/GenBank/DDBJ databases">
        <title>Complete sequence of Rhodopseudomonas palustris BisA53.</title>
        <authorList>
            <consortium name="US DOE Joint Genome Institute"/>
            <person name="Copeland A."/>
            <person name="Lucas S."/>
            <person name="Lapidus A."/>
            <person name="Barry K."/>
            <person name="Detter J.C."/>
            <person name="Glavina del Rio T."/>
            <person name="Hammon N."/>
            <person name="Israni S."/>
            <person name="Dalin E."/>
            <person name="Tice H."/>
            <person name="Pitluck S."/>
            <person name="Chain P."/>
            <person name="Malfatti S."/>
            <person name="Shin M."/>
            <person name="Vergez L."/>
            <person name="Schmutz J."/>
            <person name="Larimer F."/>
            <person name="Land M."/>
            <person name="Hauser L."/>
            <person name="Pelletier D.A."/>
            <person name="Kyrpides N."/>
            <person name="Kim E."/>
            <person name="Harwood C.S."/>
            <person name="Oda Y."/>
            <person name="Richardson P."/>
        </authorList>
    </citation>
    <scope>NUCLEOTIDE SEQUENCE [LARGE SCALE GENOMIC DNA]</scope>
    <source>
        <strain>BisA53</strain>
    </source>
</reference>
<gene>
    <name evidence="1" type="primary">rplF</name>
    <name type="ordered locus">RPE_3571</name>
</gene>
<keyword id="KW-0687">Ribonucleoprotein</keyword>
<keyword id="KW-0689">Ribosomal protein</keyword>
<keyword id="KW-0694">RNA-binding</keyword>
<keyword id="KW-0699">rRNA-binding</keyword>
<feature type="chain" id="PRO_1000055293" description="Large ribosomal subunit protein uL6">
    <location>
        <begin position="1"/>
        <end position="177"/>
    </location>
</feature>
<organism>
    <name type="scientific">Rhodopseudomonas palustris (strain BisA53)</name>
    <dbReference type="NCBI Taxonomy" id="316055"/>
    <lineage>
        <taxon>Bacteria</taxon>
        <taxon>Pseudomonadati</taxon>
        <taxon>Pseudomonadota</taxon>
        <taxon>Alphaproteobacteria</taxon>
        <taxon>Hyphomicrobiales</taxon>
        <taxon>Nitrobacteraceae</taxon>
        <taxon>Rhodopseudomonas</taxon>
    </lineage>
</organism>
<dbReference type="EMBL" id="CP000463">
    <property type="protein sequence ID" value="ABJ07501.1"/>
    <property type="molecule type" value="Genomic_DNA"/>
</dbReference>
<dbReference type="SMR" id="Q07KN3"/>
<dbReference type="STRING" id="316055.RPE_3571"/>
<dbReference type="KEGG" id="rpe:RPE_3571"/>
<dbReference type="eggNOG" id="COG0097">
    <property type="taxonomic scope" value="Bacteria"/>
</dbReference>
<dbReference type="HOGENOM" id="CLU_065464_1_2_5"/>
<dbReference type="OrthoDB" id="9805007at2"/>
<dbReference type="GO" id="GO:0022625">
    <property type="term" value="C:cytosolic large ribosomal subunit"/>
    <property type="evidence" value="ECO:0007669"/>
    <property type="project" value="TreeGrafter"/>
</dbReference>
<dbReference type="GO" id="GO:0019843">
    <property type="term" value="F:rRNA binding"/>
    <property type="evidence" value="ECO:0007669"/>
    <property type="project" value="UniProtKB-UniRule"/>
</dbReference>
<dbReference type="GO" id="GO:0003735">
    <property type="term" value="F:structural constituent of ribosome"/>
    <property type="evidence" value="ECO:0007669"/>
    <property type="project" value="InterPro"/>
</dbReference>
<dbReference type="GO" id="GO:0002181">
    <property type="term" value="P:cytoplasmic translation"/>
    <property type="evidence" value="ECO:0007669"/>
    <property type="project" value="TreeGrafter"/>
</dbReference>
<dbReference type="FunFam" id="3.90.930.12:FF:000001">
    <property type="entry name" value="50S ribosomal protein L6"/>
    <property type="match status" value="1"/>
</dbReference>
<dbReference type="FunFam" id="3.90.930.12:FF:000002">
    <property type="entry name" value="50S ribosomal protein L6"/>
    <property type="match status" value="1"/>
</dbReference>
<dbReference type="Gene3D" id="3.90.930.12">
    <property type="entry name" value="Ribosomal protein L6, alpha-beta domain"/>
    <property type="match status" value="2"/>
</dbReference>
<dbReference type="HAMAP" id="MF_01365_B">
    <property type="entry name" value="Ribosomal_uL6_B"/>
    <property type="match status" value="1"/>
</dbReference>
<dbReference type="InterPro" id="IPR000702">
    <property type="entry name" value="Ribosomal_uL6-like"/>
</dbReference>
<dbReference type="InterPro" id="IPR036789">
    <property type="entry name" value="Ribosomal_uL6-like_a/b-dom_sf"/>
</dbReference>
<dbReference type="InterPro" id="IPR020040">
    <property type="entry name" value="Ribosomal_uL6_a/b-dom"/>
</dbReference>
<dbReference type="InterPro" id="IPR019906">
    <property type="entry name" value="Ribosomal_uL6_bac-type"/>
</dbReference>
<dbReference type="InterPro" id="IPR002358">
    <property type="entry name" value="Ribosomal_uL6_CS"/>
</dbReference>
<dbReference type="NCBIfam" id="TIGR03654">
    <property type="entry name" value="L6_bact"/>
    <property type="match status" value="1"/>
</dbReference>
<dbReference type="PANTHER" id="PTHR11655">
    <property type="entry name" value="60S/50S RIBOSOMAL PROTEIN L6/L9"/>
    <property type="match status" value="1"/>
</dbReference>
<dbReference type="PANTHER" id="PTHR11655:SF14">
    <property type="entry name" value="LARGE RIBOSOMAL SUBUNIT PROTEIN UL6M"/>
    <property type="match status" value="1"/>
</dbReference>
<dbReference type="Pfam" id="PF00347">
    <property type="entry name" value="Ribosomal_L6"/>
    <property type="match status" value="2"/>
</dbReference>
<dbReference type="PIRSF" id="PIRSF002162">
    <property type="entry name" value="Ribosomal_L6"/>
    <property type="match status" value="1"/>
</dbReference>
<dbReference type="PRINTS" id="PR00059">
    <property type="entry name" value="RIBOSOMALL6"/>
</dbReference>
<dbReference type="SUPFAM" id="SSF56053">
    <property type="entry name" value="Ribosomal protein L6"/>
    <property type="match status" value="2"/>
</dbReference>
<dbReference type="PROSITE" id="PS00525">
    <property type="entry name" value="RIBOSOMAL_L6_1"/>
    <property type="match status" value="1"/>
</dbReference>
<name>RL6_RHOP5</name>
<sequence length="177" mass="19309">MSRVGKKPVTVPSGVTASVEGQTVKVKGPKGQLQFVVHDDVDVKLENGEVTVKPRYETNRARALYGTARAQVANLVEGVTKGFEKKLEITGVGYRATLQGKNLQLALGYSHDVVYTIPEGIAITVPKPTEINIVGIDSQVVGQVAAEIRSYRPPEPYKGKGVRYANEFIFRKEGKKK</sequence>
<proteinExistence type="inferred from homology"/>
<evidence type="ECO:0000255" key="1">
    <source>
        <dbReference type="HAMAP-Rule" id="MF_01365"/>
    </source>
</evidence>
<evidence type="ECO:0000305" key="2"/>
<accession>Q07KN3</accession>
<protein>
    <recommendedName>
        <fullName evidence="1">Large ribosomal subunit protein uL6</fullName>
    </recommendedName>
    <alternativeName>
        <fullName evidence="2">50S ribosomal protein L6</fullName>
    </alternativeName>
</protein>